<name>ISK6_BOVIN</name>
<comment type="function">
    <text evidence="1">Serine protease inhibitor selective for kallikreins. Efficiently inhibits KLK4, KLK5, KLK6, KLK7, KLK12, KLK13 and KLK14. Doesn't inhibit KLK8. Inhibits acrosin, trypsin, and chymotrypsin.</text>
</comment>
<comment type="subcellular location">
    <subcellularLocation>
        <location evidence="2">Secreted</location>
    </subcellularLocation>
</comment>
<comment type="tissue specificity">
    <text>Seminal plasma.</text>
</comment>
<comment type="polymorphism">
    <text evidence="5">Two allelic forms are known, IIA and IIB. The sequence shown corresponds to allele IIA.</text>
</comment>
<comment type="miscellaneous">
    <text>The sequence of BUSI-IIA is shown.</text>
</comment>
<proteinExistence type="evidence at protein level"/>
<gene>
    <name type="primary">SPINK6</name>
</gene>
<sequence length="80" mass="8663">MKTSGVFLLLSLALFCFFSGVFGQGAQVDCAEFKDPKVYCTRESNPHCGSDGQTYGNKCAFCKAVMKSGGKINLKHRGKC</sequence>
<organism>
    <name type="scientific">Bos taurus</name>
    <name type="common">Bovine</name>
    <dbReference type="NCBI Taxonomy" id="9913"/>
    <lineage>
        <taxon>Eukaryota</taxon>
        <taxon>Metazoa</taxon>
        <taxon>Chordata</taxon>
        <taxon>Craniata</taxon>
        <taxon>Vertebrata</taxon>
        <taxon>Euteleostomi</taxon>
        <taxon>Mammalia</taxon>
        <taxon>Eutheria</taxon>
        <taxon>Laurasiatheria</taxon>
        <taxon>Artiodactyla</taxon>
        <taxon>Ruminantia</taxon>
        <taxon>Pecora</taxon>
        <taxon>Bovidae</taxon>
        <taxon>Bovinae</taxon>
        <taxon>Bos</taxon>
    </lineage>
</organism>
<dbReference type="EMBL" id="DY218174">
    <property type="status" value="NOT_ANNOTATED_CDS"/>
    <property type="molecule type" value="mRNA"/>
</dbReference>
<dbReference type="PIR" id="A01235">
    <property type="entry name" value="XTBO"/>
</dbReference>
<dbReference type="RefSeq" id="XP_002706142.1">
    <property type="nucleotide sequence ID" value="XM_002706096.4"/>
</dbReference>
<dbReference type="RefSeq" id="XP_015327798.1">
    <property type="nucleotide sequence ID" value="XM_015472312.3"/>
</dbReference>
<dbReference type="PDB" id="1BUS">
    <property type="method" value="NMR"/>
    <property type="chains" value="A=25-80"/>
</dbReference>
<dbReference type="PDB" id="2BUS">
    <property type="method" value="NMR"/>
    <property type="chains" value="A=25-80"/>
</dbReference>
<dbReference type="PDBsum" id="1BUS"/>
<dbReference type="PDBsum" id="2BUS"/>
<dbReference type="SMR" id="P01001"/>
<dbReference type="FunCoup" id="P01001">
    <property type="interactions" value="34"/>
</dbReference>
<dbReference type="STRING" id="9913.ENSBTAP00000044797"/>
<dbReference type="MEROPS" id="I01.015"/>
<dbReference type="PaxDb" id="9913-ENSBTAP00000044797"/>
<dbReference type="Ensembl" id="ENSBTAT00000047606.5">
    <property type="protein sequence ID" value="ENSBTAP00000044797.3"/>
    <property type="gene ID" value="ENSBTAG00000033470.5"/>
</dbReference>
<dbReference type="GeneID" id="100335759"/>
<dbReference type="KEGG" id="bta:100335759"/>
<dbReference type="CTD" id="404203"/>
<dbReference type="VEuPathDB" id="HostDB:ENSBTAG00000033470"/>
<dbReference type="eggNOG" id="KOG3649">
    <property type="taxonomic scope" value="Eukaryota"/>
</dbReference>
<dbReference type="GeneTree" id="ENSGT00530000064225"/>
<dbReference type="HOGENOM" id="CLU_169765_1_0_1"/>
<dbReference type="InParanoid" id="P01001"/>
<dbReference type="OMA" id="RESDPHC"/>
<dbReference type="OrthoDB" id="126772at2759"/>
<dbReference type="Reactome" id="R-BTA-6809371">
    <property type="pathway name" value="Formation of the cornified envelope"/>
</dbReference>
<dbReference type="EvolutionaryTrace" id="P01001"/>
<dbReference type="Proteomes" id="UP000009136">
    <property type="component" value="Chromosome 7"/>
</dbReference>
<dbReference type="Bgee" id="ENSBTAG00000033470">
    <property type="expression patterns" value="Expressed in surface of tongue and 26 other cell types or tissues"/>
</dbReference>
<dbReference type="GO" id="GO:0005576">
    <property type="term" value="C:extracellular region"/>
    <property type="evidence" value="ECO:0007669"/>
    <property type="project" value="UniProtKB-SubCell"/>
</dbReference>
<dbReference type="GO" id="GO:0004867">
    <property type="term" value="F:serine-type endopeptidase inhibitor activity"/>
    <property type="evidence" value="ECO:0007669"/>
    <property type="project" value="UniProtKB-KW"/>
</dbReference>
<dbReference type="CDD" id="cd00104">
    <property type="entry name" value="KAZAL_FS"/>
    <property type="match status" value="1"/>
</dbReference>
<dbReference type="FunFam" id="3.30.60.30:FF:000037">
    <property type="entry name" value="Ovomucoid"/>
    <property type="match status" value="1"/>
</dbReference>
<dbReference type="Gene3D" id="3.30.60.30">
    <property type="match status" value="1"/>
</dbReference>
<dbReference type="InterPro" id="IPR050159">
    <property type="entry name" value="Kazal-type_SerProtInhib"/>
</dbReference>
<dbReference type="InterPro" id="IPR002350">
    <property type="entry name" value="Kazal_dom"/>
</dbReference>
<dbReference type="InterPro" id="IPR036058">
    <property type="entry name" value="Kazal_dom_sf"/>
</dbReference>
<dbReference type="PANTHER" id="PTHR47499:SF6">
    <property type="entry name" value="SERINE PROTEASE INHIBITOR KAZAL-TYPE 6"/>
    <property type="match status" value="1"/>
</dbReference>
<dbReference type="PANTHER" id="PTHR47499">
    <property type="entry name" value="SERINE PROTEASE INHIBITOR KAZAL-TYPE 7 SPINK7"/>
    <property type="match status" value="1"/>
</dbReference>
<dbReference type="Pfam" id="PF00050">
    <property type="entry name" value="Kazal_1"/>
    <property type="match status" value="1"/>
</dbReference>
<dbReference type="SMART" id="SM00280">
    <property type="entry name" value="KAZAL"/>
    <property type="match status" value="1"/>
</dbReference>
<dbReference type="SUPFAM" id="SSF100895">
    <property type="entry name" value="Kazal-type serine protease inhibitors"/>
    <property type="match status" value="1"/>
</dbReference>
<dbReference type="PROSITE" id="PS00282">
    <property type="entry name" value="KAZAL_1"/>
    <property type="match status" value="1"/>
</dbReference>
<dbReference type="PROSITE" id="PS51465">
    <property type="entry name" value="KAZAL_2"/>
    <property type="match status" value="1"/>
</dbReference>
<protein>
    <recommendedName>
        <fullName>Serine protease inhibitor Kazal-type 6</fullName>
    </recommendedName>
    <alternativeName>
        <fullName>Acrosin inhibitor 2</fullName>
    </alternativeName>
    <alternativeName>
        <fullName>Acrosin inhibitor IIA</fullName>
    </alternativeName>
    <alternativeName>
        <fullName>BUSI-II</fullName>
    </alternativeName>
</protein>
<reference key="1">
    <citation type="submission" date="2006-02" db="EMBL/GenBank/DDBJ databases">
        <title>AgResearch, genesis and primary industry Victoria bovine EST project.</title>
        <authorList>
            <person name="McCulloch A."/>
            <person name="Wilson T."/>
            <person name="Molenaar A."/>
            <person name="Grigor M."/>
            <person name="Davis S."/>
            <person name="Glenn M."/>
            <person name="Havukkala I."/>
            <person name="Watson J."/>
            <person name="Crawford A."/>
            <person name="Wheeler T."/>
            <person name="Hagemann L."/>
            <person name="Lee R."/>
            <person name="Hein W."/>
            <person name="Johnstone P."/>
            <person name="Maqbool N."/>
            <person name="McMahon C."/>
            <person name="McCracken J."/>
            <person name="Stelwagen K."/>
            <person name="Farr V."/>
            <person name="Singh K."/>
            <person name="Whitley J."/>
            <person name="Nicholas K."/>
            <person name="Savin K."/>
            <person name="Mather A."/>
            <person name="McPartlan H."/>
            <person name="Whitley J."/>
            <person name="Wells M."/>
            <person name="Bowman P."/>
            <person name="Goddard M."/>
            <person name="Langford C."/>
            <person name="McEwan J."/>
            <person name="Atkinson P."/>
        </authorList>
    </citation>
    <scope>NUCLEOTIDE SEQUENCE [LARGE SCALE MRNA]</scope>
    <source>
        <tissue>Seminal vesicle</tissue>
    </source>
</reference>
<reference key="2">
    <citation type="journal article" date="1979" name="Hoppe-Seyler's Z. Physiol. Chem.">
        <title>Differences in the evolution of seminal plasma acrosin inhibitors and pancreatic secretory trypsin inhibitors.</title>
        <authorList>
            <person name="Cechova D."/>
            <person name="Meloun B."/>
        </authorList>
    </citation>
    <scope>PROTEIN SEQUENCE OF 24-80 (ALLELE IIB)</scope>
    <scope>PYROGLUTAMATE FORMATION AT GLN-24</scope>
    <scope>VARIANT 24-GLN--ALA-26 DELINS LEU-PHE</scope>
</reference>
<reference key="3">
    <citation type="journal article" date="1983" name="J. Mol. Biol.">
        <title>Reinvestigation of the C-terminal end in the amino acid sequence of the proteinase inhibitor IIA from bull seminal plasma.</title>
        <authorList>
            <person name="Frank G."/>
        </authorList>
    </citation>
    <scope>SEQUENCE REVISION TO 79-80</scope>
</reference>
<reference key="4">
    <citation type="journal article" date="1983" name="J. Mol. Biol.">
        <title>Characterization of the proteinase inhibitor IIA from bull seminal plasma by 1H nuclear magnetic resonance. Stability, amide proton exchange and mobility of aromatic residues.</title>
        <authorList>
            <person name="Strop P."/>
            <person name="Wuethrich K."/>
        </authorList>
    </citation>
    <scope>STRUCTURE BY NMR OF 24-80</scope>
</reference>
<reference key="5">
    <citation type="journal article" date="1983" name="J. Mol. Biol.">
        <title>Assignment of the 1H nuclear magnetic resonance spectrum of the proteinase inhibitor IIA from bull seminal plasma by two-dimensional nuclear magnetic resonance at 500 MHz.</title>
        <authorList>
            <person name="Strop P."/>
            <person name="Wider G."/>
            <person name="Wuethrich K."/>
        </authorList>
    </citation>
    <scope>STRUCTURE BY NMR OF 24-80</scope>
    <scope>SEQUENCE REVISION</scope>
</reference>
<reference key="6">
    <citation type="journal article" date="1983" name="J. Mol. Biol.">
        <title>Preliminary structural comparison of the proteinase isoinhibitors IIA and IIB from bull seminal plasma based on individual assignments of the 1H nuclear magnetic resonance spectra by two-dimensional nuclear magnetic resonance at 500 MHz.</title>
        <authorList>
            <person name="Strop P."/>
            <person name="Cechova D."/>
            <person name="Wuethrich K."/>
        </authorList>
    </citation>
    <scope>STRUCTURE BY NMR OF 24-80 (ALLELE IIB)</scope>
</reference>
<reference key="7">
    <citation type="journal article" date="1984" name="J. Mol. Biol.">
        <title>Secondary structure in the solution conformation of the proteinase inhibitor IIA from bull seminal plasma by nuclear magnetic resonance.</title>
        <authorList>
            <person name="Williamson M.P."/>
            <person name="Marion D."/>
            <person name="Wuethrich K."/>
        </authorList>
    </citation>
    <scope>STRUCTURE BY NMR OF 24-80</scope>
</reference>
<reference key="8">
    <citation type="journal article" date="1985" name="J. Mol. Biol.">
        <title>Solution conformation of proteinase inhibitor IIA from bull seminal plasma by 1H nuclear magnetic resonance and distance geometry.</title>
        <authorList>
            <person name="Williamson M.P."/>
            <person name="Havel T.F."/>
            <person name="Wuethrich K."/>
        </authorList>
    </citation>
    <scope>STRUCTURE BY NMR OF 24-80</scope>
</reference>
<evidence type="ECO:0000250" key="1">
    <source>
        <dbReference type="UniProtKB" id="Q6UWN8"/>
    </source>
</evidence>
<evidence type="ECO:0000250" key="2">
    <source>
        <dbReference type="UniProtKB" id="Q8BT20"/>
    </source>
</evidence>
<evidence type="ECO:0000255" key="3">
    <source>
        <dbReference type="PROSITE-ProRule" id="PRU00798"/>
    </source>
</evidence>
<evidence type="ECO:0000269" key="4">
    <source>
    </source>
</evidence>
<evidence type="ECO:0000305" key="5"/>
<evidence type="ECO:0007829" key="6">
    <source>
        <dbReference type="PDB" id="1BUS"/>
    </source>
</evidence>
<evidence type="ECO:0007829" key="7">
    <source>
        <dbReference type="PDB" id="2BUS"/>
    </source>
</evidence>
<keyword id="KW-0002">3D-structure</keyword>
<keyword id="KW-0903">Direct protein sequencing</keyword>
<keyword id="KW-1015">Disulfide bond</keyword>
<keyword id="KW-0646">Protease inhibitor</keyword>
<keyword id="KW-0873">Pyrrolidone carboxylic acid</keyword>
<keyword id="KW-1185">Reference proteome</keyword>
<keyword id="KW-0964">Secreted</keyword>
<keyword id="KW-0722">Serine protease inhibitor</keyword>
<keyword id="KW-0732">Signal</keyword>
<accession>P01001</accession>
<feature type="signal peptide" evidence="4">
    <location>
        <begin position="1"/>
        <end position="23"/>
    </location>
</feature>
<feature type="chain" id="PRO_0000073033" description="Serine protease inhibitor Kazal-type 6">
    <location>
        <begin position="24"/>
        <end position="80"/>
    </location>
</feature>
<feature type="domain" description="Kazal-like" evidence="3">
    <location>
        <begin position="24"/>
        <end position="80"/>
    </location>
</feature>
<feature type="site" description="Reactive bond">
    <location>
        <begin position="42"/>
        <end position="43"/>
    </location>
</feature>
<feature type="modified residue" description="Pyrrolidone carboxylic acid" evidence="4">
    <location>
        <position position="24"/>
    </location>
</feature>
<feature type="disulfide bond">
    <location>
        <begin position="30"/>
        <end position="62"/>
    </location>
</feature>
<feature type="disulfide bond">
    <location>
        <begin position="40"/>
        <end position="59"/>
    </location>
</feature>
<feature type="disulfide bond">
    <location>
        <begin position="48"/>
        <end position="80"/>
    </location>
</feature>
<feature type="sequence variant" description="In allele IIB." evidence="4">
    <original>QGA</original>
    <variation>LF</variation>
    <location>
        <begin position="24"/>
        <end position="26"/>
    </location>
</feature>
<feature type="sequence conflict" description="In Ref. 2; AA sequence." evidence="5" ref="2">
    <original>DGQ</original>
    <variation>NGE</variation>
    <location>
        <begin position="51"/>
        <end position="53"/>
    </location>
</feature>
<feature type="helix" evidence="7">
    <location>
        <begin position="31"/>
        <end position="33"/>
    </location>
</feature>
<feature type="turn" evidence="6">
    <location>
        <begin position="35"/>
        <end position="38"/>
    </location>
</feature>
<feature type="strand" evidence="7">
    <location>
        <begin position="41"/>
        <end position="44"/>
    </location>
</feature>
<feature type="strand" evidence="6">
    <location>
        <begin position="47"/>
        <end position="52"/>
    </location>
</feature>
<feature type="strand" evidence="7">
    <location>
        <begin position="53"/>
        <end position="56"/>
    </location>
</feature>
<feature type="helix" evidence="6">
    <location>
        <begin position="58"/>
        <end position="66"/>
    </location>
</feature>
<feature type="strand" evidence="7">
    <location>
        <begin position="68"/>
        <end position="70"/>
    </location>
</feature>
<feature type="strand" evidence="7">
    <location>
        <begin position="74"/>
        <end position="78"/>
    </location>
</feature>